<dbReference type="EC" id="6.3.4.5" evidence="1"/>
<dbReference type="EMBL" id="CP000394">
    <property type="protein sequence ID" value="ABI61161.1"/>
    <property type="molecule type" value="Genomic_DNA"/>
</dbReference>
<dbReference type="SMR" id="Q0BVJ1"/>
<dbReference type="STRING" id="391165.GbCGDNIH1_0263"/>
<dbReference type="KEGG" id="gbe:GbCGDNIH1_0263"/>
<dbReference type="eggNOG" id="COG0137">
    <property type="taxonomic scope" value="Bacteria"/>
</dbReference>
<dbReference type="HOGENOM" id="CLU_032784_4_2_5"/>
<dbReference type="UniPathway" id="UPA00068">
    <property type="reaction ID" value="UER00113"/>
</dbReference>
<dbReference type="Proteomes" id="UP000001963">
    <property type="component" value="Chromosome"/>
</dbReference>
<dbReference type="GO" id="GO:0005737">
    <property type="term" value="C:cytoplasm"/>
    <property type="evidence" value="ECO:0007669"/>
    <property type="project" value="UniProtKB-SubCell"/>
</dbReference>
<dbReference type="GO" id="GO:0004055">
    <property type="term" value="F:argininosuccinate synthase activity"/>
    <property type="evidence" value="ECO:0007669"/>
    <property type="project" value="UniProtKB-UniRule"/>
</dbReference>
<dbReference type="GO" id="GO:0005524">
    <property type="term" value="F:ATP binding"/>
    <property type="evidence" value="ECO:0007669"/>
    <property type="project" value="UniProtKB-UniRule"/>
</dbReference>
<dbReference type="GO" id="GO:0000053">
    <property type="term" value="P:argininosuccinate metabolic process"/>
    <property type="evidence" value="ECO:0007669"/>
    <property type="project" value="TreeGrafter"/>
</dbReference>
<dbReference type="GO" id="GO:0006526">
    <property type="term" value="P:L-arginine biosynthetic process"/>
    <property type="evidence" value="ECO:0007669"/>
    <property type="project" value="UniProtKB-UniRule"/>
</dbReference>
<dbReference type="GO" id="GO:0000050">
    <property type="term" value="P:urea cycle"/>
    <property type="evidence" value="ECO:0007669"/>
    <property type="project" value="TreeGrafter"/>
</dbReference>
<dbReference type="CDD" id="cd01999">
    <property type="entry name" value="ASS"/>
    <property type="match status" value="1"/>
</dbReference>
<dbReference type="FunFam" id="3.40.50.620:FF:000019">
    <property type="entry name" value="Argininosuccinate synthase"/>
    <property type="match status" value="1"/>
</dbReference>
<dbReference type="FunFam" id="3.90.1260.10:FF:000007">
    <property type="entry name" value="Argininosuccinate synthase"/>
    <property type="match status" value="1"/>
</dbReference>
<dbReference type="Gene3D" id="3.90.1260.10">
    <property type="entry name" value="Argininosuccinate synthetase, chain A, domain 2"/>
    <property type="match status" value="1"/>
</dbReference>
<dbReference type="Gene3D" id="3.40.50.620">
    <property type="entry name" value="HUPs"/>
    <property type="match status" value="1"/>
</dbReference>
<dbReference type="Gene3D" id="1.20.5.470">
    <property type="entry name" value="Single helix bin"/>
    <property type="match status" value="1"/>
</dbReference>
<dbReference type="HAMAP" id="MF_00005">
    <property type="entry name" value="Arg_succ_synth_type1"/>
    <property type="match status" value="1"/>
</dbReference>
<dbReference type="InterPro" id="IPR048268">
    <property type="entry name" value="Arginosuc_syn_C"/>
</dbReference>
<dbReference type="InterPro" id="IPR048267">
    <property type="entry name" value="Arginosuc_syn_N"/>
</dbReference>
<dbReference type="InterPro" id="IPR001518">
    <property type="entry name" value="Arginosuc_synth"/>
</dbReference>
<dbReference type="InterPro" id="IPR018223">
    <property type="entry name" value="Arginosuc_synth_CS"/>
</dbReference>
<dbReference type="InterPro" id="IPR023434">
    <property type="entry name" value="Arginosuc_synth_type_1_subfam"/>
</dbReference>
<dbReference type="InterPro" id="IPR024074">
    <property type="entry name" value="AS_cat/multimer_dom_body"/>
</dbReference>
<dbReference type="InterPro" id="IPR014729">
    <property type="entry name" value="Rossmann-like_a/b/a_fold"/>
</dbReference>
<dbReference type="NCBIfam" id="TIGR00032">
    <property type="entry name" value="argG"/>
    <property type="match status" value="1"/>
</dbReference>
<dbReference type="NCBIfam" id="NF001770">
    <property type="entry name" value="PRK00509.1"/>
    <property type="match status" value="1"/>
</dbReference>
<dbReference type="PANTHER" id="PTHR11587">
    <property type="entry name" value="ARGININOSUCCINATE SYNTHASE"/>
    <property type="match status" value="1"/>
</dbReference>
<dbReference type="PANTHER" id="PTHR11587:SF2">
    <property type="entry name" value="ARGININOSUCCINATE SYNTHASE"/>
    <property type="match status" value="1"/>
</dbReference>
<dbReference type="Pfam" id="PF20979">
    <property type="entry name" value="Arginosuc_syn_C"/>
    <property type="match status" value="1"/>
</dbReference>
<dbReference type="Pfam" id="PF00764">
    <property type="entry name" value="Arginosuc_synth"/>
    <property type="match status" value="1"/>
</dbReference>
<dbReference type="SUPFAM" id="SSF52402">
    <property type="entry name" value="Adenine nucleotide alpha hydrolases-like"/>
    <property type="match status" value="1"/>
</dbReference>
<dbReference type="SUPFAM" id="SSF69864">
    <property type="entry name" value="Argininosuccinate synthetase, C-terminal domain"/>
    <property type="match status" value="1"/>
</dbReference>
<dbReference type="PROSITE" id="PS00564">
    <property type="entry name" value="ARGININOSUCCIN_SYN_1"/>
    <property type="match status" value="1"/>
</dbReference>
<dbReference type="PROSITE" id="PS00565">
    <property type="entry name" value="ARGININOSUCCIN_SYN_2"/>
    <property type="match status" value="1"/>
</dbReference>
<gene>
    <name evidence="1" type="primary">argG</name>
    <name type="ordered locus">GbCGDNIH1_0263</name>
</gene>
<feature type="chain" id="PRO_0000263930" description="Argininosuccinate synthase">
    <location>
        <begin position="1"/>
        <end position="416"/>
    </location>
</feature>
<feature type="binding site" evidence="1">
    <location>
        <begin position="19"/>
        <end position="27"/>
    </location>
    <ligand>
        <name>ATP</name>
        <dbReference type="ChEBI" id="CHEBI:30616"/>
    </ligand>
</feature>
<feature type="binding site" evidence="1">
    <location>
        <position position="46"/>
    </location>
    <ligand>
        <name>ATP</name>
        <dbReference type="ChEBI" id="CHEBI:30616"/>
    </ligand>
</feature>
<feature type="binding site" evidence="1">
    <location>
        <position position="97"/>
    </location>
    <ligand>
        <name>L-citrulline</name>
        <dbReference type="ChEBI" id="CHEBI:57743"/>
    </ligand>
</feature>
<feature type="binding site" evidence="1">
    <location>
        <position position="102"/>
    </location>
    <ligand>
        <name>L-citrulline</name>
        <dbReference type="ChEBI" id="CHEBI:57743"/>
    </ligand>
</feature>
<feature type="binding site" evidence="1">
    <location>
        <position position="127"/>
    </location>
    <ligand>
        <name>ATP</name>
        <dbReference type="ChEBI" id="CHEBI:30616"/>
    </ligand>
</feature>
<feature type="binding site" evidence="1">
    <location>
        <position position="129"/>
    </location>
    <ligand>
        <name>L-aspartate</name>
        <dbReference type="ChEBI" id="CHEBI:29991"/>
    </ligand>
</feature>
<feature type="binding site" evidence="1">
    <location>
        <position position="133"/>
    </location>
    <ligand>
        <name>L-aspartate</name>
        <dbReference type="ChEBI" id="CHEBI:29991"/>
    </ligand>
</feature>
<feature type="binding site" evidence="1">
    <location>
        <position position="133"/>
    </location>
    <ligand>
        <name>L-citrulline</name>
        <dbReference type="ChEBI" id="CHEBI:57743"/>
    </ligand>
</feature>
<feature type="binding site" evidence="1">
    <location>
        <position position="134"/>
    </location>
    <ligand>
        <name>L-aspartate</name>
        <dbReference type="ChEBI" id="CHEBI:29991"/>
    </ligand>
</feature>
<feature type="binding site" evidence="1">
    <location>
        <position position="137"/>
    </location>
    <ligand>
        <name>L-citrulline</name>
        <dbReference type="ChEBI" id="CHEBI:57743"/>
    </ligand>
</feature>
<feature type="binding site" evidence="1">
    <location>
        <position position="188"/>
    </location>
    <ligand>
        <name>L-citrulline</name>
        <dbReference type="ChEBI" id="CHEBI:57743"/>
    </ligand>
</feature>
<feature type="binding site" evidence="1">
    <location>
        <position position="197"/>
    </location>
    <ligand>
        <name>L-citrulline</name>
        <dbReference type="ChEBI" id="CHEBI:57743"/>
    </ligand>
</feature>
<feature type="binding site" evidence="1">
    <location>
        <position position="273"/>
    </location>
    <ligand>
        <name>L-citrulline</name>
        <dbReference type="ChEBI" id="CHEBI:57743"/>
    </ligand>
</feature>
<feature type="binding site" evidence="1">
    <location>
        <position position="285"/>
    </location>
    <ligand>
        <name>L-citrulline</name>
        <dbReference type="ChEBI" id="CHEBI:57743"/>
    </ligand>
</feature>
<evidence type="ECO:0000255" key="1">
    <source>
        <dbReference type="HAMAP-Rule" id="MF_00005"/>
    </source>
</evidence>
<sequence>MTRDIQTMAVKDVKKVVLAYSGGLDTSVILRWLQTTYNCEVVTFTADLGQGEELEPARRKAEMFGVKEIFVDDLRETFVKDFVFPMFRANAVYEGQYLLGTSIARPLIAQRQIEIAELTGADAVAHGATGKGNDQVRFELSYYALKPDVKVIAPWREWDLTSRTKLLEFAEANQIPIAKDKRGEAPFSVDANLLHSSSEGKLLEDPAEEPDEIVYQRTISPEAAPDKATIITIDFEHGDPVAIDGIRLSPATLLAKLNELGKANGIGRLDLVENRFVGMKSRGVYETPGGTILLVAHRGIESITLDREAAHLKDSLMPRYAELIYNGFWFSPERRMLQAAIDESQKSVTGRVRLKLYKGNTIVIGRESPNSLYSLKHVTFEDDQGAYDQVDAQGFIKLQSLRLRLAAIAGRRGGSL</sequence>
<name>ASSY_GRABC</name>
<protein>
    <recommendedName>
        <fullName evidence="1">Argininosuccinate synthase</fullName>
        <ecNumber evidence="1">6.3.4.5</ecNumber>
    </recommendedName>
    <alternativeName>
        <fullName evidence="1">Citrulline--aspartate ligase</fullName>
    </alternativeName>
</protein>
<accession>Q0BVJ1</accession>
<proteinExistence type="inferred from homology"/>
<reference key="1">
    <citation type="journal article" date="2007" name="J. Bacteriol.">
        <title>Genome sequence analysis of the emerging human pathogenic acetic acid bacterium Granulibacter bethesdensis.</title>
        <authorList>
            <person name="Greenberg D.E."/>
            <person name="Porcella S.F."/>
            <person name="Zelazny A.M."/>
            <person name="Virtaneva K."/>
            <person name="Sturdevant D.E."/>
            <person name="Kupko J.J. III"/>
            <person name="Barbian K.D."/>
            <person name="Babar A."/>
            <person name="Dorward D.W."/>
            <person name="Holland S.M."/>
        </authorList>
    </citation>
    <scope>NUCLEOTIDE SEQUENCE [LARGE SCALE GENOMIC DNA]</scope>
    <source>
        <strain>ATCC BAA-1260 / CGDNIH1</strain>
    </source>
</reference>
<comment type="catalytic activity">
    <reaction evidence="1">
        <text>L-citrulline + L-aspartate + ATP = 2-(N(omega)-L-arginino)succinate + AMP + diphosphate + H(+)</text>
        <dbReference type="Rhea" id="RHEA:10932"/>
        <dbReference type="ChEBI" id="CHEBI:15378"/>
        <dbReference type="ChEBI" id="CHEBI:29991"/>
        <dbReference type="ChEBI" id="CHEBI:30616"/>
        <dbReference type="ChEBI" id="CHEBI:33019"/>
        <dbReference type="ChEBI" id="CHEBI:57472"/>
        <dbReference type="ChEBI" id="CHEBI:57743"/>
        <dbReference type="ChEBI" id="CHEBI:456215"/>
        <dbReference type="EC" id="6.3.4.5"/>
    </reaction>
</comment>
<comment type="pathway">
    <text evidence="1">Amino-acid biosynthesis; L-arginine biosynthesis; L-arginine from L-ornithine and carbamoyl phosphate: step 2/3.</text>
</comment>
<comment type="subunit">
    <text evidence="1">Homotetramer.</text>
</comment>
<comment type="subcellular location">
    <subcellularLocation>
        <location evidence="1">Cytoplasm</location>
    </subcellularLocation>
</comment>
<comment type="similarity">
    <text evidence="1">Belongs to the argininosuccinate synthase family. Type 1 subfamily.</text>
</comment>
<organism>
    <name type="scientific">Granulibacter bethesdensis (strain ATCC BAA-1260 / CGDNIH1)</name>
    <dbReference type="NCBI Taxonomy" id="391165"/>
    <lineage>
        <taxon>Bacteria</taxon>
        <taxon>Pseudomonadati</taxon>
        <taxon>Pseudomonadota</taxon>
        <taxon>Alphaproteobacteria</taxon>
        <taxon>Acetobacterales</taxon>
        <taxon>Acetobacteraceae</taxon>
        <taxon>Granulibacter</taxon>
    </lineage>
</organism>
<keyword id="KW-0028">Amino-acid biosynthesis</keyword>
<keyword id="KW-0055">Arginine biosynthesis</keyword>
<keyword id="KW-0067">ATP-binding</keyword>
<keyword id="KW-0963">Cytoplasm</keyword>
<keyword id="KW-0436">Ligase</keyword>
<keyword id="KW-0547">Nucleotide-binding</keyword>
<keyword id="KW-1185">Reference proteome</keyword>